<organism>
    <name type="scientific">Debaryomyces hansenii (strain ATCC 36239 / CBS 767 / BCRC 21394 / JCM 1990 / NBRC 0083 / IGC 2968)</name>
    <name type="common">Yeast</name>
    <name type="synonym">Torulaspora hansenii</name>
    <dbReference type="NCBI Taxonomy" id="284592"/>
    <lineage>
        <taxon>Eukaryota</taxon>
        <taxon>Fungi</taxon>
        <taxon>Dikarya</taxon>
        <taxon>Ascomycota</taxon>
        <taxon>Saccharomycotina</taxon>
        <taxon>Pichiomycetes</taxon>
        <taxon>Debaryomycetaceae</taxon>
        <taxon>Debaryomyces</taxon>
    </lineage>
</organism>
<gene>
    <name evidence="1" type="primary">PAN3</name>
    <name type="ordered locus">DEHA2D13530g</name>
</gene>
<reference key="1">
    <citation type="journal article" date="2004" name="Nature">
        <title>Genome evolution in yeasts.</title>
        <authorList>
            <person name="Dujon B."/>
            <person name="Sherman D."/>
            <person name="Fischer G."/>
            <person name="Durrens P."/>
            <person name="Casaregola S."/>
            <person name="Lafontaine I."/>
            <person name="de Montigny J."/>
            <person name="Marck C."/>
            <person name="Neuveglise C."/>
            <person name="Talla E."/>
            <person name="Goffard N."/>
            <person name="Frangeul L."/>
            <person name="Aigle M."/>
            <person name="Anthouard V."/>
            <person name="Babour A."/>
            <person name="Barbe V."/>
            <person name="Barnay S."/>
            <person name="Blanchin S."/>
            <person name="Beckerich J.-M."/>
            <person name="Beyne E."/>
            <person name="Bleykasten C."/>
            <person name="Boisrame A."/>
            <person name="Boyer J."/>
            <person name="Cattolico L."/>
            <person name="Confanioleri F."/>
            <person name="de Daruvar A."/>
            <person name="Despons L."/>
            <person name="Fabre E."/>
            <person name="Fairhead C."/>
            <person name="Ferry-Dumazet H."/>
            <person name="Groppi A."/>
            <person name="Hantraye F."/>
            <person name="Hennequin C."/>
            <person name="Jauniaux N."/>
            <person name="Joyet P."/>
            <person name="Kachouri R."/>
            <person name="Kerrest A."/>
            <person name="Koszul R."/>
            <person name="Lemaire M."/>
            <person name="Lesur I."/>
            <person name="Ma L."/>
            <person name="Muller H."/>
            <person name="Nicaud J.-M."/>
            <person name="Nikolski M."/>
            <person name="Oztas S."/>
            <person name="Ozier-Kalogeropoulos O."/>
            <person name="Pellenz S."/>
            <person name="Potier S."/>
            <person name="Richard G.-F."/>
            <person name="Straub M.-L."/>
            <person name="Suleau A."/>
            <person name="Swennen D."/>
            <person name="Tekaia F."/>
            <person name="Wesolowski-Louvel M."/>
            <person name="Westhof E."/>
            <person name="Wirth B."/>
            <person name="Zeniou-Meyer M."/>
            <person name="Zivanovic Y."/>
            <person name="Bolotin-Fukuhara M."/>
            <person name="Thierry A."/>
            <person name="Bouchier C."/>
            <person name="Caudron B."/>
            <person name="Scarpelli C."/>
            <person name="Gaillardin C."/>
            <person name="Weissenbach J."/>
            <person name="Wincker P."/>
            <person name="Souciet J.-L."/>
        </authorList>
    </citation>
    <scope>NUCLEOTIDE SEQUENCE [LARGE SCALE GENOMIC DNA]</scope>
    <source>
        <strain>ATCC 36239 / CBS 767 / BCRC 21394 / JCM 1990 / NBRC 0083 / IGC 2968</strain>
    </source>
</reference>
<evidence type="ECO:0000255" key="1">
    <source>
        <dbReference type="HAMAP-Rule" id="MF_03181"/>
    </source>
</evidence>
<evidence type="ECO:0000256" key="2">
    <source>
        <dbReference type="SAM" id="MobiDB-lite"/>
    </source>
</evidence>
<evidence type="ECO:0000305" key="3"/>
<protein>
    <recommendedName>
        <fullName evidence="1">PAN2-PAN3 deadenylation complex subunit PAN3</fullName>
    </recommendedName>
    <alternativeName>
        <fullName evidence="1">PAB1P-dependent poly(A)-specific ribonuclease</fullName>
    </alternativeName>
    <alternativeName>
        <fullName evidence="1">Poly(A)-nuclease deadenylation complex subunit 3</fullName>
        <shortName evidence="1">PAN deadenylation complex subunit 3</shortName>
    </alternativeName>
</protein>
<comment type="function">
    <text evidence="1">Regulatory subunit of the poly(A)-nuclease (PAN) deadenylation complex, one of two cytoplasmic mRNA deadenylases involved in mRNA turnover. PAN specifically shortens poly(A) tails of RNA and the activity is stimulated by poly(A)-binding protein PAB1. PAN deadenylation is followed by rapid degradation of the shortened mRNA tails by the CCR4-NOT complex. Deadenylated mRNAs are then degraded by two alternative mechanisms, namely exosome-mediated 3'-5' exonucleolytic degradation, or deadenylation-dependent mRNA decaping and subsequent 5'-3' exonucleolytic degradation by XRN1. May also be involved in post-transcriptional maturation of mRNA poly(A) tails. PAN3 acts as a positive regulator for PAN activity, recruiting the catalytic subunit PAN2 to mRNA via its interaction with RNA and with PAB1.</text>
</comment>
<comment type="subunit">
    <text evidence="1">Homodimer. Forms a heterotrimer with a catalytic subunit PAN2 to form the poly(A)-nuclease (PAN) deadenylation complex. Interacts (via PAM-2 motif) with poly(A)-binding protein PAB1 (via PABC domain), conferring substrate specificity of the enzyme complex.</text>
</comment>
<comment type="subcellular location">
    <subcellularLocation>
        <location evidence="1">Cytoplasm</location>
    </subcellularLocation>
</comment>
<comment type="domain">
    <text evidence="1">The N-terminal zinc finger binds to poly(A) RNA.</text>
</comment>
<comment type="domain">
    <text evidence="1">Contains a pseudokinase domain. The protein kinase domain is predicted to be catalytically inactive because some of the residues important for catalytic activity are substituted and it lacks the equivalent of the binding site for a peptide substrate. However, it has retained an ATP-binding site and ATP-binding is required for mRNA degradation, stimulating the activity of the PAN2 nuclease in vitro. The nucleotide-binding site is juxtaposed to the RNase active site of PAN2 in the complex and may actually bind nucleosides of a poly(A) RNA rather than ATP, feeding the poly(A)-tail to the active site of the deadenylase and thus increasing the efficiency with which this distributive enzyme degrades oligo(A) RNAs.</text>
</comment>
<comment type="domain">
    <text evidence="1">The pseudokinase domain, the coiled-coil (CC), and C-terminal knob domain (CK) form a structural unit (PKC) that forms an extensive high-affinity interaction surface for PAN2.</text>
</comment>
<comment type="similarity">
    <text evidence="1">Belongs to the protein kinase superfamily. PAN3 family.</text>
</comment>
<keyword id="KW-0067">ATP-binding</keyword>
<keyword id="KW-0175">Coiled coil</keyword>
<keyword id="KW-0963">Cytoplasm</keyword>
<keyword id="KW-0479">Metal-binding</keyword>
<keyword id="KW-0507">mRNA processing</keyword>
<keyword id="KW-0547">Nucleotide-binding</keyword>
<keyword id="KW-1185">Reference proteome</keyword>
<keyword id="KW-0862">Zinc</keyword>
<keyword id="KW-0863">Zinc-finger</keyword>
<accession>Q6BRV5</accession>
<name>PAN3_DEBHA</name>
<proteinExistence type="inferred from homology"/>
<sequence length="660" mass="74148">MNINLDSAKDTFCKNVLIYGYCKYENKGCAFSHTVKPTSSVPGSQGSNATTNSSGNTNADMKKKFNFNTPSFQPSTVPNLTNKFSNLSPNLKEIPVFVPSGGMSNADSGGMNEPEMNDSVTPNKKFNASTPSFMPSNPYISNNDQISAPSPVMAQSVSTPGAKANGNIQHNPYLPGNAGTPQPTSAVAAPNSADVFFQQPTSSYPLQHHLYAPAPPPRLTIPLPPHEINVNSMFIPNDLRETLLKRNEATLQTLPRSNLPDHVNIYHSLVPIDTSFENISKVYELPSFVYKVFSNVDGNPYALRKIDIQSVLRITNELPFKYIKKWKSVKCANIVQLQEAFTSMAFGGSYSSLIVTYDYFPNSNTLQEQHISRRLGGKLEPITEELLWNYVIEITNALINIHENNLAARSALHLSKILVTNKNRVRLGGVGISDILNYEDDEEQIQQKGLDAFRHELQQADIKKFGKLILDLAALCLPNNARNHEPKDLISLLKTSTTVNFSGEFINLLTELNMNTSDLQEFNRNHLSRRILNFCSNAQDSQDFMESQLSTELENARVFRLITKLNFIIDRPEYDNDPNWQENGNKYIIKLFRDYIFFQYDEFGKPVCDLSRVLTNLNKLDAGIDEKFLLVNKDEKNCIIVSYKEIRDIIDSAFRTLTRG</sequence>
<feature type="chain" id="PRO_0000295367" description="PAN2-PAN3 deadenylation complex subunit PAN3">
    <location>
        <begin position="1"/>
        <end position="660"/>
    </location>
</feature>
<feature type="zinc finger region" description="C3H1-type" evidence="1">
    <location>
        <begin position="7"/>
        <end position="36"/>
    </location>
</feature>
<feature type="region of interest" description="Disordered" evidence="2">
    <location>
        <begin position="36"/>
        <end position="60"/>
    </location>
</feature>
<feature type="region of interest" description="Disordered" evidence="2">
    <location>
        <begin position="150"/>
        <end position="186"/>
    </location>
</feature>
<feature type="region of interest" description="Pseudokinase domain" evidence="1">
    <location>
        <begin position="252"/>
        <end position="528"/>
    </location>
</feature>
<feature type="region of interest" description="Knob domain" evidence="1">
    <location>
        <begin position="568"/>
        <end position="660"/>
    </location>
</feature>
<feature type="coiled-coil region" evidence="1">
    <location>
        <begin position="529"/>
        <end position="567"/>
    </location>
</feature>
<feature type="short sequence motif" description="PABPC-interacting motif-2 (PAM-2)" evidence="3">
    <location>
        <begin position="59"/>
        <end position="79"/>
    </location>
</feature>
<feature type="compositionally biased region" description="Low complexity" evidence="2">
    <location>
        <begin position="43"/>
        <end position="59"/>
    </location>
</feature>
<feature type="compositionally biased region" description="Polar residues" evidence="2">
    <location>
        <begin position="150"/>
        <end position="159"/>
    </location>
</feature>
<feature type="binding site" evidence="1">
    <location>
        <position position="304"/>
    </location>
    <ligand>
        <name>ATP</name>
        <dbReference type="ChEBI" id="CHEBI:30616"/>
    </ligand>
</feature>
<feature type="binding site" evidence="1">
    <location>
        <begin position="358"/>
        <end position="365"/>
    </location>
    <ligand>
        <name>ATP</name>
        <dbReference type="ChEBI" id="CHEBI:30616"/>
    </ligand>
</feature>
<feature type="binding site" evidence="1">
    <location>
        <begin position="415"/>
        <end position="416"/>
    </location>
    <ligand>
        <name>ATP</name>
        <dbReference type="ChEBI" id="CHEBI:30616"/>
    </ligand>
</feature>
<dbReference type="EMBL" id="CR382136">
    <property type="protein sequence ID" value="CAG87233.2"/>
    <property type="molecule type" value="Genomic_DNA"/>
</dbReference>
<dbReference type="RefSeq" id="XP_459065.2">
    <property type="nucleotide sequence ID" value="XM_459065.1"/>
</dbReference>
<dbReference type="SMR" id="Q6BRV5"/>
<dbReference type="FunCoup" id="Q6BRV5">
    <property type="interactions" value="680"/>
</dbReference>
<dbReference type="STRING" id="284592.Q6BRV5"/>
<dbReference type="GeneID" id="2901170"/>
<dbReference type="KEGG" id="dha:DEHA2D13530g"/>
<dbReference type="VEuPathDB" id="FungiDB:DEHA2D13530g"/>
<dbReference type="eggNOG" id="KOG3741">
    <property type="taxonomic scope" value="Eukaryota"/>
</dbReference>
<dbReference type="HOGENOM" id="CLU_016423_1_0_1"/>
<dbReference type="InParanoid" id="Q6BRV5"/>
<dbReference type="OMA" id="YVFHSVD"/>
<dbReference type="OrthoDB" id="204958at2759"/>
<dbReference type="Proteomes" id="UP000000599">
    <property type="component" value="Chromosome D"/>
</dbReference>
<dbReference type="GO" id="GO:0000932">
    <property type="term" value="C:P-body"/>
    <property type="evidence" value="ECO:0007669"/>
    <property type="project" value="TreeGrafter"/>
</dbReference>
<dbReference type="GO" id="GO:0031251">
    <property type="term" value="C:PAN complex"/>
    <property type="evidence" value="ECO:0007669"/>
    <property type="project" value="UniProtKB-UniRule"/>
</dbReference>
<dbReference type="GO" id="GO:0005524">
    <property type="term" value="F:ATP binding"/>
    <property type="evidence" value="ECO:0007669"/>
    <property type="project" value="UniProtKB-UniRule"/>
</dbReference>
<dbReference type="GO" id="GO:0008143">
    <property type="term" value="F:poly(A) binding"/>
    <property type="evidence" value="ECO:0007669"/>
    <property type="project" value="TreeGrafter"/>
</dbReference>
<dbReference type="GO" id="GO:0008270">
    <property type="term" value="F:zinc ion binding"/>
    <property type="evidence" value="ECO:0007669"/>
    <property type="project" value="UniProtKB-KW"/>
</dbReference>
<dbReference type="GO" id="GO:0006397">
    <property type="term" value="P:mRNA processing"/>
    <property type="evidence" value="ECO:0007669"/>
    <property type="project" value="UniProtKB-KW"/>
</dbReference>
<dbReference type="GO" id="GO:0000289">
    <property type="term" value="P:nuclear-transcribed mRNA poly(A) tail shortening"/>
    <property type="evidence" value="ECO:0007669"/>
    <property type="project" value="UniProtKB-UniRule"/>
</dbReference>
<dbReference type="Gene3D" id="1.10.287.3700">
    <property type="match status" value="1"/>
</dbReference>
<dbReference type="Gene3D" id="1.20.5.5160">
    <property type="match status" value="1"/>
</dbReference>
<dbReference type="Gene3D" id="6.10.250.3160">
    <property type="match status" value="1"/>
</dbReference>
<dbReference type="Gene3D" id="1.10.510.10">
    <property type="entry name" value="Transferase(Phosphotransferase) domain 1"/>
    <property type="match status" value="1"/>
</dbReference>
<dbReference type="HAMAP" id="MF_03181">
    <property type="entry name" value="PAN3"/>
    <property type="match status" value="1"/>
</dbReference>
<dbReference type="InterPro" id="IPR011009">
    <property type="entry name" value="Kinase-like_dom_sf"/>
</dbReference>
<dbReference type="InterPro" id="IPR030844">
    <property type="entry name" value="PAN3"/>
</dbReference>
<dbReference type="InterPro" id="IPR041332">
    <property type="entry name" value="Pan3_PK"/>
</dbReference>
<dbReference type="InterPro" id="IPR000571">
    <property type="entry name" value="Znf_CCCH"/>
</dbReference>
<dbReference type="PANTHER" id="PTHR12272">
    <property type="entry name" value="DEADENYLATION COMPLEX SUBUNIT PAN3"/>
    <property type="match status" value="1"/>
</dbReference>
<dbReference type="PANTHER" id="PTHR12272:SF11">
    <property type="entry name" value="PAN2-PAN3 DEADENYLATION COMPLEX SUBUNIT PAN3"/>
    <property type="match status" value="1"/>
</dbReference>
<dbReference type="Pfam" id="PF18101">
    <property type="entry name" value="Pan3_PK"/>
    <property type="match status" value="1"/>
</dbReference>
<dbReference type="SUPFAM" id="SSF56112">
    <property type="entry name" value="Protein kinase-like (PK-like)"/>
    <property type="match status" value="1"/>
</dbReference>
<dbReference type="PROSITE" id="PS50103">
    <property type="entry name" value="ZF_C3H1"/>
    <property type="match status" value="1"/>
</dbReference>